<organism>
    <name type="scientific">Clostridium acetobutylicum (strain ATCC 824 / DSM 792 / JCM 1419 / IAM 19013 / LMG 5710 / NBRC 13948 / NRRL B-527 / VKM B-1787 / 2291 / W)</name>
    <dbReference type="NCBI Taxonomy" id="272562"/>
    <lineage>
        <taxon>Bacteria</taxon>
        <taxon>Bacillati</taxon>
        <taxon>Bacillota</taxon>
        <taxon>Clostridia</taxon>
        <taxon>Eubacteriales</taxon>
        <taxon>Clostridiaceae</taxon>
        <taxon>Clostridium</taxon>
    </lineage>
</organism>
<comment type="function">
    <text evidence="1">Required for correct processing of both the 5' and 3' ends of 5S rRNA precursor. Cleaves both sides of a double-stranded region yielding mature 5S rRNA in one step.</text>
</comment>
<comment type="catalytic activity">
    <reaction evidence="1">
        <text>Endonucleolytic cleavage of RNA, removing 21 and 42 nucleotides, respectively, from the 5'- and 3'-termini of a 5S-rRNA precursor.</text>
        <dbReference type="EC" id="3.1.26.8"/>
    </reaction>
</comment>
<comment type="cofactor">
    <cofactor evidence="1">
        <name>Mg(2+)</name>
        <dbReference type="ChEBI" id="CHEBI:18420"/>
    </cofactor>
    <text evidence="1">Binds two Mg(2+) per subunit.</text>
</comment>
<comment type="subcellular location">
    <subcellularLocation>
        <location evidence="1">Cytoplasm</location>
    </subcellularLocation>
</comment>
<comment type="similarity">
    <text evidence="1">Belongs to the ribonuclease M5 family.</text>
</comment>
<dbReference type="EC" id="3.1.26.8" evidence="1"/>
<dbReference type="EMBL" id="AE001437">
    <property type="protein sequence ID" value="AAK80928.1"/>
    <property type="molecule type" value="Genomic_DNA"/>
</dbReference>
<dbReference type="PIR" id="E97267">
    <property type="entry name" value="E97267"/>
</dbReference>
<dbReference type="RefSeq" id="NP_349588.1">
    <property type="nucleotide sequence ID" value="NC_003030.1"/>
</dbReference>
<dbReference type="RefSeq" id="WP_010966269.1">
    <property type="nucleotide sequence ID" value="NC_003030.1"/>
</dbReference>
<dbReference type="SMR" id="Q97EW9"/>
<dbReference type="STRING" id="272562.CA_C2987"/>
<dbReference type="GeneID" id="44999474"/>
<dbReference type="KEGG" id="cac:CA_C2987"/>
<dbReference type="PATRIC" id="fig|272562.8.peg.3171"/>
<dbReference type="eggNOG" id="COG1658">
    <property type="taxonomic scope" value="Bacteria"/>
</dbReference>
<dbReference type="HOGENOM" id="CLU_109405_0_0_9"/>
<dbReference type="OrthoDB" id="9791329at2"/>
<dbReference type="Proteomes" id="UP000000814">
    <property type="component" value="Chromosome"/>
</dbReference>
<dbReference type="GO" id="GO:0005737">
    <property type="term" value="C:cytoplasm"/>
    <property type="evidence" value="ECO:0007669"/>
    <property type="project" value="UniProtKB-SubCell"/>
</dbReference>
<dbReference type="GO" id="GO:0046872">
    <property type="term" value="F:metal ion binding"/>
    <property type="evidence" value="ECO:0007669"/>
    <property type="project" value="UniProtKB-KW"/>
</dbReference>
<dbReference type="GO" id="GO:0043822">
    <property type="term" value="F:ribonuclease M5 activity"/>
    <property type="evidence" value="ECO:0007669"/>
    <property type="project" value="UniProtKB-UniRule"/>
</dbReference>
<dbReference type="GO" id="GO:0019843">
    <property type="term" value="F:rRNA binding"/>
    <property type="evidence" value="ECO:0007669"/>
    <property type="project" value="UniProtKB-KW"/>
</dbReference>
<dbReference type="GO" id="GO:0006364">
    <property type="term" value="P:rRNA processing"/>
    <property type="evidence" value="ECO:0007669"/>
    <property type="project" value="UniProtKB-UniRule"/>
</dbReference>
<dbReference type="CDD" id="cd01027">
    <property type="entry name" value="TOPRIM_RNase_M5_like"/>
    <property type="match status" value="1"/>
</dbReference>
<dbReference type="FunFam" id="3.40.1360.10:FF:000006">
    <property type="entry name" value="Ribonuclease M5"/>
    <property type="match status" value="1"/>
</dbReference>
<dbReference type="Gene3D" id="3.40.1360.10">
    <property type="match status" value="1"/>
</dbReference>
<dbReference type="HAMAP" id="MF_01469">
    <property type="entry name" value="RNase_M5"/>
    <property type="match status" value="1"/>
</dbReference>
<dbReference type="InterPro" id="IPR004466">
    <property type="entry name" value="RNase_M5"/>
</dbReference>
<dbReference type="InterPro" id="IPR025156">
    <property type="entry name" value="RNase_M5_C"/>
</dbReference>
<dbReference type="InterPro" id="IPR006171">
    <property type="entry name" value="TOPRIM_dom"/>
</dbReference>
<dbReference type="InterPro" id="IPR034141">
    <property type="entry name" value="TOPRIM_RNase_M5-like"/>
</dbReference>
<dbReference type="NCBIfam" id="TIGR00334">
    <property type="entry name" value="5S_RNA_mat_M5"/>
    <property type="match status" value="1"/>
</dbReference>
<dbReference type="PANTHER" id="PTHR39156">
    <property type="entry name" value="RIBONUCLEASE M5"/>
    <property type="match status" value="1"/>
</dbReference>
<dbReference type="PANTHER" id="PTHR39156:SF1">
    <property type="entry name" value="RIBONUCLEASE M5"/>
    <property type="match status" value="1"/>
</dbReference>
<dbReference type="Pfam" id="PF13331">
    <property type="entry name" value="DUF4093"/>
    <property type="match status" value="1"/>
</dbReference>
<dbReference type="Pfam" id="PF01751">
    <property type="entry name" value="Toprim"/>
    <property type="match status" value="1"/>
</dbReference>
<dbReference type="SMART" id="SM00493">
    <property type="entry name" value="TOPRIM"/>
    <property type="match status" value="1"/>
</dbReference>
<dbReference type="SUPFAM" id="SSF110455">
    <property type="entry name" value="Toprim domain"/>
    <property type="match status" value="1"/>
</dbReference>
<dbReference type="PROSITE" id="PS50880">
    <property type="entry name" value="TOPRIM"/>
    <property type="match status" value="1"/>
</dbReference>
<gene>
    <name evidence="1" type="primary">rnmV</name>
    <name type="ordered locus">CA_C2987</name>
</gene>
<proteinExistence type="inferred from homology"/>
<evidence type="ECO:0000255" key="1">
    <source>
        <dbReference type="HAMAP-Rule" id="MF_01469"/>
    </source>
</evidence>
<sequence length="185" mass="20507">MIKEVIVVEGRDDITAVKRAVDAEMIAVGGFGINSKIISKIKEAQKRRGVIVLTDPDFAGEKIRSIISKRVKGIKHARISQSEGTKNGDIGVENASPESIIRALNNAKCETQKKTYEFTIEDMLFFKLVGNSEAKKRRDLVGNELGIGYSNGAQFLSRLNNFGISKEELINAVNTVNRRYYDEGI</sequence>
<accession>Q97EW9</accession>
<name>RNM5_CLOAB</name>
<reference key="1">
    <citation type="journal article" date="2001" name="J. Bacteriol.">
        <title>Genome sequence and comparative analysis of the solvent-producing bacterium Clostridium acetobutylicum.</title>
        <authorList>
            <person name="Noelling J."/>
            <person name="Breton G."/>
            <person name="Omelchenko M.V."/>
            <person name="Makarova K.S."/>
            <person name="Zeng Q."/>
            <person name="Gibson R."/>
            <person name="Lee H.M."/>
            <person name="Dubois J."/>
            <person name="Qiu D."/>
            <person name="Hitti J."/>
            <person name="Wolf Y.I."/>
            <person name="Tatusov R.L."/>
            <person name="Sabathe F."/>
            <person name="Doucette-Stamm L.A."/>
            <person name="Soucaille P."/>
            <person name="Daly M.J."/>
            <person name="Bennett G.N."/>
            <person name="Koonin E.V."/>
            <person name="Smith D.R."/>
        </authorList>
    </citation>
    <scope>NUCLEOTIDE SEQUENCE [LARGE SCALE GENOMIC DNA]</scope>
    <source>
        <strain>ATCC 824 / DSM 792 / JCM 1419 / IAM 19013 / LMG 5710 / NBRC 13948 / NRRL B-527 / VKM B-1787 / 2291 / W</strain>
    </source>
</reference>
<keyword id="KW-0963">Cytoplasm</keyword>
<keyword id="KW-0255">Endonuclease</keyword>
<keyword id="KW-0378">Hydrolase</keyword>
<keyword id="KW-0460">Magnesium</keyword>
<keyword id="KW-0479">Metal-binding</keyword>
<keyword id="KW-0540">Nuclease</keyword>
<keyword id="KW-1185">Reference proteome</keyword>
<keyword id="KW-0690">Ribosome biogenesis</keyword>
<keyword id="KW-0694">RNA-binding</keyword>
<keyword id="KW-0698">rRNA processing</keyword>
<keyword id="KW-0699">rRNA-binding</keyword>
<feature type="chain" id="PRO_0000416744" description="Ribonuclease M5">
    <location>
        <begin position="1"/>
        <end position="185"/>
    </location>
</feature>
<feature type="domain" description="Toprim" evidence="1">
    <location>
        <begin position="3"/>
        <end position="84"/>
    </location>
</feature>
<feature type="binding site" evidence="1">
    <location>
        <position position="9"/>
    </location>
    <ligand>
        <name>Mg(2+)</name>
        <dbReference type="ChEBI" id="CHEBI:18420"/>
        <label>1</label>
        <note>catalytic</note>
    </ligand>
</feature>
<feature type="binding site" evidence="1">
    <location>
        <position position="55"/>
    </location>
    <ligand>
        <name>Mg(2+)</name>
        <dbReference type="ChEBI" id="CHEBI:18420"/>
        <label>1</label>
        <note>catalytic</note>
    </ligand>
</feature>
<feature type="binding site" evidence="1">
    <location>
        <position position="55"/>
    </location>
    <ligand>
        <name>Mg(2+)</name>
        <dbReference type="ChEBI" id="CHEBI:18420"/>
        <label>2</label>
    </ligand>
</feature>
<feature type="binding site" evidence="1">
    <location>
        <position position="57"/>
    </location>
    <ligand>
        <name>Mg(2+)</name>
        <dbReference type="ChEBI" id="CHEBI:18420"/>
        <label>2</label>
    </ligand>
</feature>
<protein>
    <recommendedName>
        <fullName evidence="1">Ribonuclease M5</fullName>
        <ecNumber evidence="1">3.1.26.8</ecNumber>
    </recommendedName>
    <alternativeName>
        <fullName evidence="1">RNase M5</fullName>
    </alternativeName>
    <alternativeName>
        <fullName evidence="1">Ribosomal RNA terminal maturase M5</fullName>
    </alternativeName>
</protein>